<name>GATY_SALPC</name>
<accession>C0PZ24</accession>
<feature type="chain" id="PRO_1000165280" description="D-tagatose-1,6-bisphosphate aldolase subunit GatY">
    <location>
        <begin position="1"/>
        <end position="284"/>
    </location>
</feature>
<feature type="active site" description="Proton donor" evidence="1">
    <location>
        <position position="82"/>
    </location>
</feature>
<feature type="binding site" evidence="1">
    <location>
        <position position="83"/>
    </location>
    <ligand>
        <name>Zn(2+)</name>
        <dbReference type="ChEBI" id="CHEBI:29105"/>
        <note>catalytic</note>
    </ligand>
</feature>
<feature type="binding site" evidence="1">
    <location>
        <position position="180"/>
    </location>
    <ligand>
        <name>Zn(2+)</name>
        <dbReference type="ChEBI" id="CHEBI:29105"/>
        <note>catalytic</note>
    </ligand>
</feature>
<feature type="binding site" evidence="1">
    <location>
        <position position="181"/>
    </location>
    <ligand>
        <name>dihydroxyacetone phosphate</name>
        <dbReference type="ChEBI" id="CHEBI:57642"/>
    </ligand>
</feature>
<feature type="binding site" evidence="1">
    <location>
        <position position="208"/>
    </location>
    <ligand>
        <name>Zn(2+)</name>
        <dbReference type="ChEBI" id="CHEBI:29105"/>
        <note>catalytic</note>
    </ligand>
</feature>
<feature type="binding site" evidence="1">
    <location>
        <begin position="209"/>
        <end position="211"/>
    </location>
    <ligand>
        <name>dihydroxyacetone phosphate</name>
        <dbReference type="ChEBI" id="CHEBI:57642"/>
    </ligand>
</feature>
<feature type="binding site" evidence="1">
    <location>
        <begin position="230"/>
        <end position="233"/>
    </location>
    <ligand>
        <name>dihydroxyacetone phosphate</name>
        <dbReference type="ChEBI" id="CHEBI:57642"/>
    </ligand>
</feature>
<dbReference type="EC" id="4.1.2.40" evidence="1"/>
<dbReference type="EMBL" id="CP000857">
    <property type="protein sequence ID" value="ACN47412.1"/>
    <property type="molecule type" value="Genomic_DNA"/>
</dbReference>
<dbReference type="RefSeq" id="WP_000469979.1">
    <property type="nucleotide sequence ID" value="NC_012125.1"/>
</dbReference>
<dbReference type="SMR" id="C0PZ24"/>
<dbReference type="KEGG" id="sei:SPC_3327"/>
<dbReference type="HOGENOM" id="CLU_040088_0_1_6"/>
<dbReference type="UniPathway" id="UPA00704">
    <property type="reaction ID" value="UER00716"/>
</dbReference>
<dbReference type="Proteomes" id="UP000001599">
    <property type="component" value="Chromosome"/>
</dbReference>
<dbReference type="GO" id="GO:0005829">
    <property type="term" value="C:cytosol"/>
    <property type="evidence" value="ECO:0007669"/>
    <property type="project" value="TreeGrafter"/>
</dbReference>
<dbReference type="GO" id="GO:0009025">
    <property type="term" value="F:tagatose-bisphosphate aldolase activity"/>
    <property type="evidence" value="ECO:0007669"/>
    <property type="project" value="UniProtKB-UniRule"/>
</dbReference>
<dbReference type="GO" id="GO:0008270">
    <property type="term" value="F:zinc ion binding"/>
    <property type="evidence" value="ECO:0007669"/>
    <property type="project" value="UniProtKB-UniRule"/>
</dbReference>
<dbReference type="GO" id="GO:2001059">
    <property type="term" value="P:D-tagatose 6-phosphate catabolic process"/>
    <property type="evidence" value="ECO:0007669"/>
    <property type="project" value="UniProtKB-UniRule"/>
</dbReference>
<dbReference type="GO" id="GO:0019404">
    <property type="term" value="P:galactitol catabolic process"/>
    <property type="evidence" value="ECO:0007669"/>
    <property type="project" value="InterPro"/>
</dbReference>
<dbReference type="CDD" id="cd00947">
    <property type="entry name" value="TBP_aldolase_IIB"/>
    <property type="match status" value="1"/>
</dbReference>
<dbReference type="FunFam" id="3.20.20.70:FF:000043">
    <property type="entry name" value="D-tagatose-1,6-bisphosphate aldolase subunit GatY"/>
    <property type="match status" value="1"/>
</dbReference>
<dbReference type="Gene3D" id="3.20.20.70">
    <property type="entry name" value="Aldolase class I"/>
    <property type="match status" value="1"/>
</dbReference>
<dbReference type="HAMAP" id="MF_01294">
    <property type="entry name" value="TagBP_aldolase_GatY"/>
    <property type="match status" value="1"/>
</dbReference>
<dbReference type="InterPro" id="IPR013785">
    <property type="entry name" value="Aldolase_TIM"/>
</dbReference>
<dbReference type="InterPro" id="IPR050246">
    <property type="entry name" value="Class_II_FBP_aldolase"/>
</dbReference>
<dbReference type="InterPro" id="IPR000771">
    <property type="entry name" value="FBA_II"/>
</dbReference>
<dbReference type="InterPro" id="IPR011288">
    <property type="entry name" value="TagBP_ald_KbaY/GatY"/>
</dbReference>
<dbReference type="InterPro" id="IPR023955">
    <property type="entry name" value="TagBP_aldolase_GatY"/>
</dbReference>
<dbReference type="NCBIfam" id="TIGR00167">
    <property type="entry name" value="cbbA"/>
    <property type="match status" value="1"/>
</dbReference>
<dbReference type="NCBIfam" id="NF006626">
    <property type="entry name" value="PRK09195.1"/>
    <property type="match status" value="1"/>
</dbReference>
<dbReference type="NCBIfam" id="NF009374">
    <property type="entry name" value="PRK12737.1"/>
    <property type="match status" value="1"/>
</dbReference>
<dbReference type="NCBIfam" id="TIGR01858">
    <property type="entry name" value="tag_bisphos_ald"/>
    <property type="match status" value="1"/>
</dbReference>
<dbReference type="PANTHER" id="PTHR30304">
    <property type="entry name" value="D-TAGATOSE-1,6-BISPHOSPHATE ALDOLASE"/>
    <property type="match status" value="1"/>
</dbReference>
<dbReference type="PANTHER" id="PTHR30304:SF0">
    <property type="entry name" value="D-TAGATOSE-1,6-BISPHOSPHATE ALDOLASE SUBUNIT GATY-RELATED"/>
    <property type="match status" value="1"/>
</dbReference>
<dbReference type="Pfam" id="PF01116">
    <property type="entry name" value="F_bP_aldolase"/>
    <property type="match status" value="1"/>
</dbReference>
<dbReference type="PIRSF" id="PIRSF001359">
    <property type="entry name" value="F_bP_aldolase_II"/>
    <property type="match status" value="1"/>
</dbReference>
<dbReference type="SUPFAM" id="SSF51569">
    <property type="entry name" value="Aldolase"/>
    <property type="match status" value="1"/>
</dbReference>
<dbReference type="PROSITE" id="PS00806">
    <property type="entry name" value="ALDOLASE_CLASS_II_2"/>
    <property type="match status" value="1"/>
</dbReference>
<reference key="1">
    <citation type="journal article" date="2009" name="PLoS ONE">
        <title>Salmonella paratyphi C: genetic divergence from Salmonella choleraesuis and pathogenic convergence with Salmonella typhi.</title>
        <authorList>
            <person name="Liu W.-Q."/>
            <person name="Feng Y."/>
            <person name="Wang Y."/>
            <person name="Zou Q.-H."/>
            <person name="Chen F."/>
            <person name="Guo J.-T."/>
            <person name="Peng Y.-H."/>
            <person name="Jin Y."/>
            <person name="Li Y.-G."/>
            <person name="Hu S.-N."/>
            <person name="Johnston R.N."/>
            <person name="Liu G.-R."/>
            <person name="Liu S.-L."/>
        </authorList>
    </citation>
    <scope>NUCLEOTIDE SEQUENCE [LARGE SCALE GENOMIC DNA]</scope>
    <source>
        <strain>RKS4594</strain>
    </source>
</reference>
<protein>
    <recommendedName>
        <fullName evidence="1">D-tagatose-1,6-bisphosphate aldolase subunit GatY</fullName>
        <shortName evidence="1">TBPA</shortName>
        <shortName evidence="1">TagBP aldolase</shortName>
        <ecNumber evidence="1">4.1.2.40</ecNumber>
    </recommendedName>
    <alternativeName>
        <fullName evidence="1">D-tagatose-bisphosphate aldolase class II</fullName>
    </alternativeName>
    <alternativeName>
        <fullName evidence="1">Tagatose-bisphosphate aldolase</fullName>
    </alternativeName>
</protein>
<evidence type="ECO:0000255" key="1">
    <source>
        <dbReference type="HAMAP-Rule" id="MF_01294"/>
    </source>
</evidence>
<organism>
    <name type="scientific">Salmonella paratyphi C (strain RKS4594)</name>
    <dbReference type="NCBI Taxonomy" id="476213"/>
    <lineage>
        <taxon>Bacteria</taxon>
        <taxon>Pseudomonadati</taxon>
        <taxon>Pseudomonadota</taxon>
        <taxon>Gammaproteobacteria</taxon>
        <taxon>Enterobacterales</taxon>
        <taxon>Enterobacteriaceae</taxon>
        <taxon>Salmonella</taxon>
    </lineage>
</organism>
<proteinExistence type="inferred from homology"/>
<comment type="function">
    <text evidence="1">Catalytic subunit of the tagatose-1,6-bisphosphate aldolase GatYZ, which catalyzes the reversible aldol condensation of dihydroxyacetone phosphate (DHAP or glycerone-phosphate) with glyceraldehyde 3-phosphate (G3P) to produce tagatose 1,6-bisphosphate (TBP). Requires GatZ subunit for full activity and stability. Is involved in the catabolism of galactitol.</text>
</comment>
<comment type="catalytic activity">
    <reaction evidence="1">
        <text>D-tagatofuranose 1,6-bisphosphate = D-glyceraldehyde 3-phosphate + dihydroxyacetone phosphate</text>
        <dbReference type="Rhea" id="RHEA:22948"/>
        <dbReference type="ChEBI" id="CHEBI:57642"/>
        <dbReference type="ChEBI" id="CHEBI:58694"/>
        <dbReference type="ChEBI" id="CHEBI:59776"/>
        <dbReference type="EC" id="4.1.2.40"/>
    </reaction>
</comment>
<comment type="cofactor">
    <cofactor evidence="1">
        <name>Zn(2+)</name>
        <dbReference type="ChEBI" id="CHEBI:29105"/>
    </cofactor>
    <text evidence="1">Binds 1 zinc ion per subunit.</text>
</comment>
<comment type="pathway">
    <text evidence="1">Carbohydrate metabolism; D-tagatose 6-phosphate degradation; D-glyceraldehyde 3-phosphate and glycerone phosphate from D-tagatose 6-phosphate: step 2/2.</text>
</comment>
<comment type="subunit">
    <text evidence="1">Forms a complex with GatZ.</text>
</comment>
<comment type="similarity">
    <text evidence="1">Belongs to the class II fructose-bisphosphate aldolase family. TagBP aldolase GatY subfamily.</text>
</comment>
<gene>
    <name evidence="1" type="primary">gatY</name>
    <name type="ordered locus">SPC_3327</name>
</gene>
<sequence length="284" mass="30817">MFIISGRTMLKKAQQEGYAVPAFNIHNLETLQVVVETAAELRSPLIVAGTPGTFSYAGVGNIVAIAAELAKSWNHPLAVHLDHHEKLADIKMKVAAGVRSVMIDGSHFPFADNIALVKSVVDYCHRYDVSVEAELGRLGGQEDDLIVDGKDALYTHPEQAREFVEKTGIDSLAIAIGTAHGLYTAEPKLDFERLTEIRQRVDVPLVLHGASGLPTRDITRAISLGICKVNVATELKIAFSGALKNYLTQHAEASDPRHYMIPAKAAMKEVVRKVIADCGCEGKL</sequence>
<keyword id="KW-0298">Galactitol metabolism</keyword>
<keyword id="KW-0456">Lyase</keyword>
<keyword id="KW-0479">Metal-binding</keyword>
<keyword id="KW-0862">Zinc</keyword>